<gene>
    <name type="ordered locus">BTH_I0001</name>
</gene>
<accession>Q2T2K3</accession>
<proteinExistence type="inferred from homology"/>
<keyword id="KW-0067">ATP-binding</keyword>
<keyword id="KW-0436">Ligase</keyword>
<keyword id="KW-0547">Nucleotide-binding</keyword>
<sequence>MALETFVNSEPFTFGVELEIQIVNTHNYDLTKAASDLMRLIKDAKFPGNITPEITESMIELSTGICRTHDQALGELHAIRDTLVNAADQLNVGLCGGGTHAFQQWSERQIFDAPRFQYISELYGYLAKQFTVFGQHVHIGCPDADSALFLLHSMSRFIPHFIALSASSPYVQNVDTGFHSARLNSVFAFPLSGRAPFVLTWSGFEEYFTKMVNTGVVNSMKDFYWDIRPKPGYGTIEVRVMDTPLSVDRAAAIACYIQTLARYLLIDRPLKLSEDDYLVYTFNRFEACRFGLEGTCVNPQTGERRTIAEDILDTLDRIAPHAAALGSRAALDEIGALAKARVNDASWLRTIFKQEKSLNETVRQQCLRWRE</sequence>
<reference key="1">
    <citation type="journal article" date="2005" name="BMC Genomics">
        <title>Bacterial genome adaptation to niches: divergence of the potential virulence genes in three Burkholderia species of different survival strategies.</title>
        <authorList>
            <person name="Kim H.S."/>
            <person name="Schell M.A."/>
            <person name="Yu Y."/>
            <person name="Ulrich R.L."/>
            <person name="Sarria S.H."/>
            <person name="Nierman W.C."/>
            <person name="DeShazer D."/>
        </authorList>
    </citation>
    <scope>NUCLEOTIDE SEQUENCE [LARGE SCALE GENOMIC DNA]</scope>
    <source>
        <strain>ATCC 700388 / DSM 13276 / CCUG 48851 / CIP 106301 / E264</strain>
    </source>
</reference>
<protein>
    <recommendedName>
        <fullName evidence="1">Putative glutamate--cysteine ligase 2</fullName>
        <ecNumber evidence="1">6.3.2.2</ecNumber>
    </recommendedName>
    <alternativeName>
        <fullName evidence="1">Gamma-glutamylcysteine synthetase 2</fullName>
        <shortName evidence="1">GCS 2</shortName>
        <shortName evidence="1">Gamma-GCS 2</shortName>
    </alternativeName>
</protein>
<dbReference type="EC" id="6.3.2.2" evidence="1"/>
<dbReference type="EMBL" id="CP000086">
    <property type="protein sequence ID" value="ABC37008.1"/>
    <property type="status" value="ALT_INIT"/>
    <property type="molecule type" value="Genomic_DNA"/>
</dbReference>
<dbReference type="RefSeq" id="WP_009906739.1">
    <property type="nucleotide sequence ID" value="NZ_CP008785.1"/>
</dbReference>
<dbReference type="SMR" id="Q2T2K3"/>
<dbReference type="GeneID" id="45119774"/>
<dbReference type="KEGG" id="bte:BTH_I0001"/>
<dbReference type="HOGENOM" id="CLU_044848_1_1_4"/>
<dbReference type="Proteomes" id="UP000001930">
    <property type="component" value="Chromosome I"/>
</dbReference>
<dbReference type="GO" id="GO:0005524">
    <property type="term" value="F:ATP binding"/>
    <property type="evidence" value="ECO:0007669"/>
    <property type="project" value="UniProtKB-KW"/>
</dbReference>
<dbReference type="GO" id="GO:0004357">
    <property type="term" value="F:glutamate-cysteine ligase activity"/>
    <property type="evidence" value="ECO:0007669"/>
    <property type="project" value="UniProtKB-EC"/>
</dbReference>
<dbReference type="GO" id="GO:0042398">
    <property type="term" value="P:modified amino acid biosynthetic process"/>
    <property type="evidence" value="ECO:0007669"/>
    <property type="project" value="InterPro"/>
</dbReference>
<dbReference type="Gene3D" id="3.30.590.20">
    <property type="match status" value="1"/>
</dbReference>
<dbReference type="HAMAP" id="MF_01609">
    <property type="entry name" value="Glu_cys_ligase_2"/>
    <property type="match status" value="1"/>
</dbReference>
<dbReference type="InterPro" id="IPR050141">
    <property type="entry name" value="GCL_type2/YbdK_subfam"/>
</dbReference>
<dbReference type="InterPro" id="IPR006336">
    <property type="entry name" value="GCS2"/>
</dbReference>
<dbReference type="InterPro" id="IPR014746">
    <property type="entry name" value="Gln_synth/guanido_kin_cat_dom"/>
</dbReference>
<dbReference type="InterPro" id="IPR011793">
    <property type="entry name" value="YbdK"/>
</dbReference>
<dbReference type="NCBIfam" id="TIGR02050">
    <property type="entry name" value="gshA_cyan_rel"/>
    <property type="match status" value="1"/>
</dbReference>
<dbReference type="NCBIfam" id="NF010040">
    <property type="entry name" value="PRK13516.1"/>
    <property type="match status" value="1"/>
</dbReference>
<dbReference type="PANTHER" id="PTHR36510">
    <property type="entry name" value="GLUTAMATE--CYSTEINE LIGASE 2-RELATED"/>
    <property type="match status" value="1"/>
</dbReference>
<dbReference type="PANTHER" id="PTHR36510:SF1">
    <property type="entry name" value="GLUTAMATE--CYSTEINE LIGASE 2-RELATED"/>
    <property type="match status" value="1"/>
</dbReference>
<dbReference type="Pfam" id="PF04107">
    <property type="entry name" value="GCS2"/>
    <property type="match status" value="1"/>
</dbReference>
<dbReference type="SUPFAM" id="SSF55931">
    <property type="entry name" value="Glutamine synthetase/guanido kinase"/>
    <property type="match status" value="1"/>
</dbReference>
<name>GCS2_BURTA</name>
<organism>
    <name type="scientific">Burkholderia thailandensis (strain ATCC 700388 / DSM 13276 / CCUG 48851 / CIP 106301 / E264)</name>
    <dbReference type="NCBI Taxonomy" id="271848"/>
    <lineage>
        <taxon>Bacteria</taxon>
        <taxon>Pseudomonadati</taxon>
        <taxon>Pseudomonadota</taxon>
        <taxon>Betaproteobacteria</taxon>
        <taxon>Burkholderiales</taxon>
        <taxon>Burkholderiaceae</taxon>
        <taxon>Burkholderia</taxon>
        <taxon>pseudomallei group</taxon>
    </lineage>
</organism>
<feature type="chain" id="PRO_0000255796" description="Putative glutamate--cysteine ligase 2">
    <location>
        <begin position="1"/>
        <end position="371"/>
    </location>
</feature>
<evidence type="ECO:0000255" key="1">
    <source>
        <dbReference type="HAMAP-Rule" id="MF_01609"/>
    </source>
</evidence>
<evidence type="ECO:0000305" key="2"/>
<comment type="function">
    <text evidence="1">ATP-dependent carboxylate-amine ligase which exhibits weak glutamate--cysteine ligase activity.</text>
</comment>
<comment type="catalytic activity">
    <reaction evidence="1">
        <text>L-cysteine + L-glutamate + ATP = gamma-L-glutamyl-L-cysteine + ADP + phosphate + H(+)</text>
        <dbReference type="Rhea" id="RHEA:13285"/>
        <dbReference type="ChEBI" id="CHEBI:15378"/>
        <dbReference type="ChEBI" id="CHEBI:29985"/>
        <dbReference type="ChEBI" id="CHEBI:30616"/>
        <dbReference type="ChEBI" id="CHEBI:35235"/>
        <dbReference type="ChEBI" id="CHEBI:43474"/>
        <dbReference type="ChEBI" id="CHEBI:58173"/>
        <dbReference type="ChEBI" id="CHEBI:456216"/>
        <dbReference type="EC" id="6.3.2.2"/>
    </reaction>
</comment>
<comment type="similarity">
    <text evidence="1">Belongs to the glutamate--cysteine ligase type 2 family. YbdK subfamily.</text>
</comment>
<comment type="sequence caution" evidence="2">
    <conflict type="erroneous initiation">
        <sequence resource="EMBL-CDS" id="ABC37008"/>
    </conflict>
</comment>